<gene>
    <name evidence="1" type="primary">murD</name>
    <name type="ordered locus">BMASAVP1_A0474</name>
</gene>
<keyword id="KW-0067">ATP-binding</keyword>
<keyword id="KW-0131">Cell cycle</keyword>
<keyword id="KW-0132">Cell division</keyword>
<keyword id="KW-0133">Cell shape</keyword>
<keyword id="KW-0961">Cell wall biogenesis/degradation</keyword>
<keyword id="KW-0963">Cytoplasm</keyword>
<keyword id="KW-0436">Ligase</keyword>
<keyword id="KW-0547">Nucleotide-binding</keyword>
<keyword id="KW-0573">Peptidoglycan synthesis</keyword>
<reference key="1">
    <citation type="journal article" date="2010" name="Genome Biol. Evol.">
        <title>Continuing evolution of Burkholderia mallei through genome reduction and large-scale rearrangements.</title>
        <authorList>
            <person name="Losada L."/>
            <person name="Ronning C.M."/>
            <person name="DeShazer D."/>
            <person name="Woods D."/>
            <person name="Fedorova N."/>
            <person name="Kim H.S."/>
            <person name="Shabalina S.A."/>
            <person name="Pearson T.R."/>
            <person name="Brinkac L."/>
            <person name="Tan P."/>
            <person name="Nandi T."/>
            <person name="Crabtree J."/>
            <person name="Badger J."/>
            <person name="Beckstrom-Sternberg S."/>
            <person name="Saqib M."/>
            <person name="Schutzer S.E."/>
            <person name="Keim P."/>
            <person name="Nierman W.C."/>
        </authorList>
    </citation>
    <scope>NUCLEOTIDE SEQUENCE [LARGE SCALE GENOMIC DNA]</scope>
    <source>
        <strain>SAVP1</strain>
    </source>
</reference>
<evidence type="ECO:0000255" key="1">
    <source>
        <dbReference type="HAMAP-Rule" id="MF_00639"/>
    </source>
</evidence>
<feature type="chain" id="PRO_1000056875" description="UDP-N-acetylmuramoylalanine--D-glutamate ligase">
    <location>
        <begin position="1"/>
        <end position="504"/>
    </location>
</feature>
<feature type="binding site" evidence="1">
    <location>
        <begin position="129"/>
        <end position="135"/>
    </location>
    <ligand>
        <name>ATP</name>
        <dbReference type="ChEBI" id="CHEBI:30616"/>
    </ligand>
</feature>
<organism>
    <name type="scientific">Burkholderia mallei (strain SAVP1)</name>
    <dbReference type="NCBI Taxonomy" id="320388"/>
    <lineage>
        <taxon>Bacteria</taxon>
        <taxon>Pseudomonadati</taxon>
        <taxon>Pseudomonadota</taxon>
        <taxon>Betaproteobacteria</taxon>
        <taxon>Burkholderiales</taxon>
        <taxon>Burkholderiaceae</taxon>
        <taxon>Burkholderia</taxon>
        <taxon>pseudomallei group</taxon>
    </lineage>
</organism>
<comment type="function">
    <text evidence="1">Cell wall formation. Catalyzes the addition of glutamate to the nucleotide precursor UDP-N-acetylmuramoyl-L-alanine (UMA).</text>
</comment>
<comment type="catalytic activity">
    <reaction evidence="1">
        <text>UDP-N-acetyl-alpha-D-muramoyl-L-alanine + D-glutamate + ATP = UDP-N-acetyl-alpha-D-muramoyl-L-alanyl-D-glutamate + ADP + phosphate + H(+)</text>
        <dbReference type="Rhea" id="RHEA:16429"/>
        <dbReference type="ChEBI" id="CHEBI:15378"/>
        <dbReference type="ChEBI" id="CHEBI:29986"/>
        <dbReference type="ChEBI" id="CHEBI:30616"/>
        <dbReference type="ChEBI" id="CHEBI:43474"/>
        <dbReference type="ChEBI" id="CHEBI:83898"/>
        <dbReference type="ChEBI" id="CHEBI:83900"/>
        <dbReference type="ChEBI" id="CHEBI:456216"/>
        <dbReference type="EC" id="6.3.2.9"/>
    </reaction>
</comment>
<comment type="pathway">
    <text evidence="1">Cell wall biogenesis; peptidoglycan biosynthesis.</text>
</comment>
<comment type="subcellular location">
    <subcellularLocation>
        <location evidence="1">Cytoplasm</location>
    </subcellularLocation>
</comment>
<comment type="similarity">
    <text evidence="1">Belongs to the MurCDEF family.</text>
</comment>
<protein>
    <recommendedName>
        <fullName evidence="1">UDP-N-acetylmuramoylalanine--D-glutamate ligase</fullName>
        <ecNumber evidence="1">6.3.2.9</ecNumber>
    </recommendedName>
    <alternativeName>
        <fullName evidence="1">D-glutamic acid-adding enzyme</fullName>
    </alternativeName>
    <alternativeName>
        <fullName evidence="1">UDP-N-acetylmuramoyl-L-alanyl-D-glutamate synthetase</fullName>
    </alternativeName>
</protein>
<proteinExistence type="inferred from homology"/>
<name>MURD_BURMS</name>
<accession>A1V0S0</accession>
<sequence>MFGDRQRPMVLVLGLGESGLAIARWCARHGCRLRVADTRETPPNLAALTAAGVDFEFVGGAFSPALVDGGIELVALSPGLSPLAEDLAPLVAAARERGIPVWGELEFFAQALAALGANGYAPKVIAITGTNGKTTTTSLAGLLCERAGKKVAVAGNISPAMLDKLTEAIDAAALPDVWVLELSSFQLDTAHTFAPDAATILNITQDHLDWHGGFAAYAAAKGRVFGPRTVRVLNRDDAEVMRFAPPAAAADAPRAVTFGLNEPAADGDYGLLRENGIAWLVEAIDRDGADAPAAPSRRRKQEAANPPDIALKRLMPADALRIRGLHNAANALAAYALARAIGLPAAPLLHGLREYRGEPHRVEVIATLDGVDYVDDSKGTNVGATVAALDGLAQRAVLIAGGDGKGQDFEPLAAPVARWCRAVMLIGRDAPALREALADTGVPLADHATLEAAVRAASALAQPGDAVLLSPACASLDMFRNYAHRADVFRSAVEDIALEKGTTL</sequence>
<dbReference type="EC" id="6.3.2.9" evidence="1"/>
<dbReference type="EMBL" id="CP000526">
    <property type="protein sequence ID" value="ABM50556.1"/>
    <property type="molecule type" value="Genomic_DNA"/>
</dbReference>
<dbReference type="RefSeq" id="WP_004203798.1">
    <property type="nucleotide sequence ID" value="NC_008785.1"/>
</dbReference>
<dbReference type="SMR" id="A1V0S0"/>
<dbReference type="GeneID" id="93061629"/>
<dbReference type="KEGG" id="bmv:BMASAVP1_A0474"/>
<dbReference type="HOGENOM" id="CLU_032540_1_1_4"/>
<dbReference type="UniPathway" id="UPA00219"/>
<dbReference type="GO" id="GO:0005737">
    <property type="term" value="C:cytoplasm"/>
    <property type="evidence" value="ECO:0007669"/>
    <property type="project" value="UniProtKB-SubCell"/>
</dbReference>
<dbReference type="GO" id="GO:0005524">
    <property type="term" value="F:ATP binding"/>
    <property type="evidence" value="ECO:0007669"/>
    <property type="project" value="UniProtKB-UniRule"/>
</dbReference>
<dbReference type="GO" id="GO:0008764">
    <property type="term" value="F:UDP-N-acetylmuramoylalanine-D-glutamate ligase activity"/>
    <property type="evidence" value="ECO:0007669"/>
    <property type="project" value="UniProtKB-UniRule"/>
</dbReference>
<dbReference type="GO" id="GO:0051301">
    <property type="term" value="P:cell division"/>
    <property type="evidence" value="ECO:0007669"/>
    <property type="project" value="UniProtKB-KW"/>
</dbReference>
<dbReference type="GO" id="GO:0071555">
    <property type="term" value="P:cell wall organization"/>
    <property type="evidence" value="ECO:0007669"/>
    <property type="project" value="UniProtKB-KW"/>
</dbReference>
<dbReference type="GO" id="GO:0009252">
    <property type="term" value="P:peptidoglycan biosynthetic process"/>
    <property type="evidence" value="ECO:0007669"/>
    <property type="project" value="UniProtKB-UniRule"/>
</dbReference>
<dbReference type="GO" id="GO:0008360">
    <property type="term" value="P:regulation of cell shape"/>
    <property type="evidence" value="ECO:0007669"/>
    <property type="project" value="UniProtKB-KW"/>
</dbReference>
<dbReference type="Gene3D" id="3.90.190.20">
    <property type="entry name" value="Mur ligase, C-terminal domain"/>
    <property type="match status" value="1"/>
</dbReference>
<dbReference type="Gene3D" id="3.40.1190.10">
    <property type="entry name" value="Mur-like, catalytic domain"/>
    <property type="match status" value="1"/>
</dbReference>
<dbReference type="Gene3D" id="3.40.50.720">
    <property type="entry name" value="NAD(P)-binding Rossmann-like Domain"/>
    <property type="match status" value="1"/>
</dbReference>
<dbReference type="HAMAP" id="MF_00639">
    <property type="entry name" value="MurD"/>
    <property type="match status" value="1"/>
</dbReference>
<dbReference type="InterPro" id="IPR036565">
    <property type="entry name" value="Mur-like_cat_sf"/>
</dbReference>
<dbReference type="InterPro" id="IPR004101">
    <property type="entry name" value="Mur_ligase_C"/>
</dbReference>
<dbReference type="InterPro" id="IPR036615">
    <property type="entry name" value="Mur_ligase_C_dom_sf"/>
</dbReference>
<dbReference type="InterPro" id="IPR013221">
    <property type="entry name" value="Mur_ligase_cen"/>
</dbReference>
<dbReference type="InterPro" id="IPR005762">
    <property type="entry name" value="MurD"/>
</dbReference>
<dbReference type="NCBIfam" id="TIGR01087">
    <property type="entry name" value="murD"/>
    <property type="match status" value="1"/>
</dbReference>
<dbReference type="PANTHER" id="PTHR43692">
    <property type="entry name" value="UDP-N-ACETYLMURAMOYLALANINE--D-GLUTAMATE LIGASE"/>
    <property type="match status" value="1"/>
</dbReference>
<dbReference type="PANTHER" id="PTHR43692:SF1">
    <property type="entry name" value="UDP-N-ACETYLMURAMOYLALANINE--D-GLUTAMATE LIGASE"/>
    <property type="match status" value="1"/>
</dbReference>
<dbReference type="Pfam" id="PF02875">
    <property type="entry name" value="Mur_ligase_C"/>
    <property type="match status" value="1"/>
</dbReference>
<dbReference type="Pfam" id="PF08245">
    <property type="entry name" value="Mur_ligase_M"/>
    <property type="match status" value="1"/>
</dbReference>
<dbReference type="Pfam" id="PF21799">
    <property type="entry name" value="MurD-like_N"/>
    <property type="match status" value="1"/>
</dbReference>
<dbReference type="SUPFAM" id="SSF51984">
    <property type="entry name" value="MurCD N-terminal domain"/>
    <property type="match status" value="1"/>
</dbReference>
<dbReference type="SUPFAM" id="SSF53623">
    <property type="entry name" value="MurD-like peptide ligases, catalytic domain"/>
    <property type="match status" value="1"/>
</dbReference>
<dbReference type="SUPFAM" id="SSF53244">
    <property type="entry name" value="MurD-like peptide ligases, peptide-binding domain"/>
    <property type="match status" value="1"/>
</dbReference>